<gene>
    <name evidence="4" type="ORF">HAPgp23</name>
</gene>
<comment type="function">
    <text evidence="1">Serves as a base for tail tube protein polymerization and acts as a template for tail length determination.</text>
</comment>
<comment type="similarity">
    <text evidence="3">Belongs to the P2likevirus tape measure protein family.</text>
</comment>
<sequence length="861" mass="90043">MASKYSVTLAAEDGYSAAFRGFAEAAEQMQENIRGHQAELRELNRLGRQMDGYQSLQGDLAATAAALDDAREKQARLSREMREAEEPSRRLQNEYDKATATVAGLSAEHRSQSNELDRLQGSLEEAGVDLSRFADEQRRIEEATRQTNSVLEDQRARMQAVSDAQARVTAAEGRVAANREARSQLRGEMVETLALGYLASRPMNSAMDMETSMADVAKVISFAEGEREQYANANLRLASDRLIASSGIRGTDIADIQYAAGQSGIFNEMEGQERFDGVMEFTRQAAIMAAAFDVSAGDAGSAMVSWRQGMNLDGDQALQLADATNHLGNNFNTTAADLTELLVRQGSVATTAGLSAEQAAALGAAFLNPGTQREVAATGFKNFILRINQGAATTDKRREQWNALGFEPEELARRMQVEAPTVIREVLQAIRAAPADEQSAITETLFGTESIGAISPLLVNLDAVDKAFNEVSDTARYSGSMLREAEGVADTSRTTWNVXTAEVARLVTQVGNGMLPVFEAVAPPVTAVIGYMADFTEANTELVGALAAGAAGLVAVKAAVLGVRYASLLIGQVGNQGALMRARLDQRTAQTALAADGAVGRLNAAINRLGGGAAGGGRNQRGNGSAAAGAAGAAGAAGAAGAAGAAGAAGAASRAAPGVQNGWRAWAANVGNSRAGQVAGKVALPVALTAGAIGVANAVGGGDAADVGSTAGGLVGGMGGFGGLMRQQMALGEEFVFSLGSGFPYSSLQRRSDGGWIEIDITYASPSSQNTGQALEQIRLSGTAFYAAGMQRLDELRAMQSERRPYVLVDGLGNNLGRWKIMSVEEQQTRVIDDGTAMKVAWVLQLEEFVDDAASSDDDSG</sequence>
<feature type="chain" id="PRO_0000431946" description="Probable tape measure protein">
    <location>
        <begin position="1"/>
        <end position="861"/>
    </location>
</feature>
<feature type="coiled-coil region" evidence="2">
    <location>
        <begin position="20"/>
        <end position="127"/>
    </location>
</feature>
<evidence type="ECO:0000250" key="1">
    <source>
        <dbReference type="UniProtKB" id="O64314"/>
    </source>
</evidence>
<evidence type="ECO:0000255" key="2"/>
<evidence type="ECO:0000305" key="3"/>
<evidence type="ECO:0000312" key="4">
    <source>
        <dbReference type="EMBL" id="ABY90391.1"/>
    </source>
</evidence>
<protein>
    <recommendedName>
        <fullName evidence="1">Probable tape measure protein</fullName>
        <shortName>TMP</shortName>
    </recommendedName>
    <alternativeName>
        <fullName evidence="3">Gene product 23</fullName>
        <shortName>gp23</shortName>
    </alternativeName>
</protein>
<name>TMP_BPHA1</name>
<reference key="1">
    <citation type="journal article" date="2008" name="J. Virol.">
        <title>The temperate marine phage PhiHAP-1 of Halomonas aquamarina possesses a linear plasmid-like prophage genome.</title>
        <authorList>
            <person name="Mobberley J.M."/>
            <person name="Authement R.N."/>
            <person name="Segall A.M."/>
            <person name="Paul J.H."/>
        </authorList>
    </citation>
    <scope>NUCLEOTIDE SEQUENCE [GENOMIC DNA]</scope>
</reference>
<organismHost>
    <name type="scientific">Vreelandella aquamarina</name>
    <dbReference type="NCBI Taxonomy" id="77097"/>
</organismHost>
<proteinExistence type="inferred from homology"/>
<keyword id="KW-0175">Coiled coil</keyword>
<keyword id="KW-1185">Reference proteome</keyword>
<keyword id="KW-1188">Viral release from host cell</keyword>
<keyword id="KW-1245">Viral tail assembly</keyword>
<dbReference type="EMBL" id="EU399241">
    <property type="protein sequence ID" value="ABY90391.1"/>
    <property type="molecule type" value="Genomic_DNA"/>
</dbReference>
<dbReference type="RefSeq" id="YP_001686759.1">
    <property type="nucleotide sequence ID" value="NC_010342.1"/>
</dbReference>
<dbReference type="GeneID" id="5912348"/>
<dbReference type="KEGG" id="vg:5912348"/>
<dbReference type="Proteomes" id="UP000001179">
    <property type="component" value="Segment"/>
</dbReference>
<dbReference type="GO" id="GO:0098003">
    <property type="term" value="P:viral tail assembly"/>
    <property type="evidence" value="ECO:0007669"/>
    <property type="project" value="UniProtKB-KW"/>
</dbReference>
<dbReference type="InterPro" id="IPR009734">
    <property type="entry name" value="Myoviridae_GpU"/>
</dbReference>
<dbReference type="InterPro" id="IPR010090">
    <property type="entry name" value="Phage_tape_meas"/>
</dbReference>
<dbReference type="NCBIfam" id="TIGR01760">
    <property type="entry name" value="tape_meas_TP901"/>
    <property type="match status" value="1"/>
</dbReference>
<dbReference type="PANTHER" id="PTHR37813">
    <property type="entry name" value="FELS-2 PROPHAGE PROTEIN"/>
    <property type="match status" value="1"/>
</dbReference>
<dbReference type="PANTHER" id="PTHR37813:SF1">
    <property type="entry name" value="FELS-2 PROPHAGE PROTEIN"/>
    <property type="match status" value="1"/>
</dbReference>
<dbReference type="Pfam" id="PF06995">
    <property type="entry name" value="Phage_P2_GpU"/>
    <property type="match status" value="1"/>
</dbReference>
<dbReference type="Pfam" id="PF10145">
    <property type="entry name" value="PhageMin_Tail"/>
    <property type="match status" value="1"/>
</dbReference>
<accession>B0ZSH1</accession>
<organism>
    <name type="scientific">Halomonas phage phiHAP-1 (isolate -/Gulf of Mexico/-/2001)</name>
    <name type="common">Bacteriophage phiHAP-1</name>
    <dbReference type="NCBI Taxonomy" id="1283337"/>
    <lineage>
        <taxon>Viruses</taxon>
        <taxon>Duplodnaviria</taxon>
        <taxon>Heunggongvirae</taxon>
        <taxon>Uroviricota</taxon>
        <taxon>Caudoviricetes</taxon>
        <taxon>Hapunavirus</taxon>
        <taxon>Hapunavirus HAP1</taxon>
    </lineage>
</organism>